<gene>
    <name type="primary">RpS6</name>
</gene>
<accession>Q95V32</accession>
<name>RS6_SPOFR</name>
<organism>
    <name type="scientific">Spodoptera frugiperda</name>
    <name type="common">Fall armyworm</name>
    <dbReference type="NCBI Taxonomy" id="7108"/>
    <lineage>
        <taxon>Eukaryota</taxon>
        <taxon>Metazoa</taxon>
        <taxon>Ecdysozoa</taxon>
        <taxon>Arthropoda</taxon>
        <taxon>Hexapoda</taxon>
        <taxon>Insecta</taxon>
        <taxon>Pterygota</taxon>
        <taxon>Neoptera</taxon>
        <taxon>Endopterygota</taxon>
        <taxon>Lepidoptera</taxon>
        <taxon>Glossata</taxon>
        <taxon>Ditrysia</taxon>
        <taxon>Noctuoidea</taxon>
        <taxon>Noctuidae</taxon>
        <taxon>Amphipyrinae</taxon>
        <taxon>Spodoptera</taxon>
    </lineage>
</organism>
<dbReference type="EMBL" id="AF429980">
    <property type="protein sequence ID" value="AAL26582.1"/>
    <property type="molecule type" value="mRNA"/>
</dbReference>
<dbReference type="SMR" id="Q95V32"/>
<dbReference type="Proteomes" id="UP000829999">
    <property type="component" value="Unplaced"/>
</dbReference>
<dbReference type="GO" id="GO:0005737">
    <property type="term" value="C:cytoplasm"/>
    <property type="evidence" value="ECO:0007669"/>
    <property type="project" value="UniProtKB-SubCell"/>
</dbReference>
<dbReference type="GO" id="GO:0005730">
    <property type="term" value="C:nucleolus"/>
    <property type="evidence" value="ECO:0007669"/>
    <property type="project" value="UniProtKB-SubCell"/>
</dbReference>
<dbReference type="GO" id="GO:0005840">
    <property type="term" value="C:ribosome"/>
    <property type="evidence" value="ECO:0007669"/>
    <property type="project" value="UniProtKB-KW"/>
</dbReference>
<dbReference type="GO" id="GO:0032040">
    <property type="term" value="C:small-subunit processome"/>
    <property type="evidence" value="ECO:0000250"/>
    <property type="project" value="UniProtKB"/>
</dbReference>
<dbReference type="GO" id="GO:0003735">
    <property type="term" value="F:structural constituent of ribosome"/>
    <property type="evidence" value="ECO:0007669"/>
    <property type="project" value="InterPro"/>
</dbReference>
<dbReference type="GO" id="GO:0042274">
    <property type="term" value="P:ribosomal small subunit biogenesis"/>
    <property type="evidence" value="ECO:0000250"/>
    <property type="project" value="UniProtKB"/>
</dbReference>
<dbReference type="GO" id="GO:0006412">
    <property type="term" value="P:translation"/>
    <property type="evidence" value="ECO:0007669"/>
    <property type="project" value="InterPro"/>
</dbReference>
<dbReference type="Gene3D" id="1.20.5.2650">
    <property type="match status" value="1"/>
</dbReference>
<dbReference type="InterPro" id="IPR001377">
    <property type="entry name" value="Ribosomal_eS6"/>
</dbReference>
<dbReference type="InterPro" id="IPR014401">
    <property type="entry name" value="Ribosomal_eS6-like"/>
</dbReference>
<dbReference type="InterPro" id="IPR018282">
    <property type="entry name" value="Ribosomal_eS6_CS"/>
</dbReference>
<dbReference type="PANTHER" id="PTHR11502">
    <property type="entry name" value="40S RIBOSOMAL PROTEIN S6"/>
    <property type="match status" value="1"/>
</dbReference>
<dbReference type="Pfam" id="PF01092">
    <property type="entry name" value="Ribosomal_S6e"/>
    <property type="match status" value="1"/>
</dbReference>
<dbReference type="PIRSF" id="PIRSF002129">
    <property type="entry name" value="Ribosom_S6_euk"/>
    <property type="match status" value="1"/>
</dbReference>
<dbReference type="SMART" id="SM01405">
    <property type="entry name" value="Ribosomal_S6e"/>
    <property type="match status" value="1"/>
</dbReference>
<dbReference type="PROSITE" id="PS00578">
    <property type="entry name" value="RIBOSOMAL_S6E"/>
    <property type="match status" value="1"/>
</dbReference>
<evidence type="ECO:0000250" key="1">
    <source>
        <dbReference type="UniProtKB" id="P62753"/>
    </source>
</evidence>
<evidence type="ECO:0000256" key="2">
    <source>
        <dbReference type="SAM" id="MobiDB-lite"/>
    </source>
</evidence>
<evidence type="ECO:0000305" key="3"/>
<comment type="function">
    <text evidence="1">Component of the 40S small ribosomal subunit. Plays an important role in controlling cell growth and proliferation through the selective translation of particular classes of mRNA. Part of the small subunit (SSU) processome, first precursor of the small eukaryotic ribosomal subunit. During the assembly of the SSU processome in the nucleolus, many ribosome biogenesis factors, an RNA chaperone and ribosomal proteins associate with the nascent pre-rRNA and work in concert to generate RNA folding, modifications, rearrangements and cleavage as well as targeted degradation of pre-ribosomal RNA by the RNA exosome.</text>
</comment>
<comment type="subunit">
    <text evidence="1">Component of the small ribosomal subunit. Part of the small subunit (SSU) processome, composed of more than 70 proteins and the RNA chaperone small nucleolar RNA (snoRNA) U3.</text>
</comment>
<comment type="subcellular location">
    <subcellularLocation>
        <location evidence="1">Cytoplasm</location>
    </subcellularLocation>
    <subcellularLocation>
        <location evidence="1">Nucleus</location>
        <location evidence="1">Nucleolus</location>
    </subcellularLocation>
</comment>
<comment type="PTM">
    <text evidence="1">Ribosomal protein S6 is the major substrate of protein kinases in eukaryote ribosomes.</text>
</comment>
<comment type="similarity">
    <text evidence="3">Belongs to the eukaryotic ribosomal protein eS6 family.</text>
</comment>
<sequence length="253" mass="29253">MKLNVSFPATGCQKLFEVVDEHKLRIFYEKRMGAEVEADQLGDEWKGYVLRIAGGNDKQGFPMKQGVLTNSRVRLLMSKGHSCYRPRRDGERKRKSVRGCIVDANLSVLALVIVRKGEQEIPGLTDGNVPRRLGPKRASKIRKLFNLSKEDDVRRYVVKRLLPAKEGKENAKPRYKAPKIQRLVTPVVLQRRRHRLALKKKRLAKRKQSENDYAKLLAQRKKESKVRRQEELKRRRSASMRDSKSSDKSAPQK</sequence>
<feature type="chain" id="PRO_0000137325" description="Small ribosomal subunit protein eS6">
    <location>
        <begin position="1"/>
        <end position="253"/>
    </location>
</feature>
<feature type="region of interest" description="Disordered" evidence="2">
    <location>
        <begin position="200"/>
        <end position="253"/>
    </location>
</feature>
<feature type="compositionally biased region" description="Basic and acidic residues" evidence="2">
    <location>
        <begin position="226"/>
        <end position="247"/>
    </location>
</feature>
<protein>
    <recommendedName>
        <fullName evidence="3">Small ribosomal subunit protein eS6</fullName>
    </recommendedName>
    <alternativeName>
        <fullName>40S ribosomal protein S6</fullName>
    </alternativeName>
</protein>
<proteinExistence type="evidence at transcript level"/>
<reference key="1">
    <citation type="journal article" date="2003" name="Bioinformatics">
        <title>Annotation pattern of ESTs from Spodoptera frugiperda Sf9 cells and analysis of the ribosomal protein genes reveal insect-specific features and unexpectedly low codon usage bias.</title>
        <authorList>
            <person name="Landais I."/>
            <person name="Ogliastro M."/>
            <person name="Mita K."/>
            <person name="Nohata J."/>
            <person name="Lopez-Ferber M."/>
            <person name="Duonor-Cerutti M."/>
            <person name="Shimada T."/>
            <person name="Fournier P."/>
            <person name="Devauchelle G."/>
        </authorList>
    </citation>
    <scope>NUCLEOTIDE SEQUENCE [LARGE SCALE MRNA]</scope>
</reference>
<keyword id="KW-0963">Cytoplasm</keyword>
<keyword id="KW-0539">Nucleus</keyword>
<keyword id="KW-0597">Phosphoprotein</keyword>
<keyword id="KW-0687">Ribonucleoprotein</keyword>
<keyword id="KW-0689">Ribosomal protein</keyword>